<organism>
    <name type="scientific">Lacticaseibacillus paracasei (strain ATCC 334 / BCRC 17002 / CCUG 31169 / CIP 107868 / KCTC 3260 / NRRL B-441)</name>
    <name type="common">Lactobacillus paracasei</name>
    <dbReference type="NCBI Taxonomy" id="321967"/>
    <lineage>
        <taxon>Bacteria</taxon>
        <taxon>Bacillati</taxon>
        <taxon>Bacillota</taxon>
        <taxon>Bacilli</taxon>
        <taxon>Lactobacillales</taxon>
        <taxon>Lactobacillaceae</taxon>
        <taxon>Lacticaseibacillus</taxon>
    </lineage>
</organism>
<reference key="1">
    <citation type="journal article" date="2006" name="Proc. Natl. Acad. Sci. U.S.A.">
        <title>Comparative genomics of the lactic acid bacteria.</title>
        <authorList>
            <person name="Makarova K.S."/>
            <person name="Slesarev A."/>
            <person name="Wolf Y.I."/>
            <person name="Sorokin A."/>
            <person name="Mirkin B."/>
            <person name="Koonin E.V."/>
            <person name="Pavlov A."/>
            <person name="Pavlova N."/>
            <person name="Karamychev V."/>
            <person name="Polouchine N."/>
            <person name="Shakhova V."/>
            <person name="Grigoriev I."/>
            <person name="Lou Y."/>
            <person name="Rohksar D."/>
            <person name="Lucas S."/>
            <person name="Huang K."/>
            <person name="Goodstein D.M."/>
            <person name="Hawkins T."/>
            <person name="Plengvidhya V."/>
            <person name="Welker D."/>
            <person name="Hughes J."/>
            <person name="Goh Y."/>
            <person name="Benson A."/>
            <person name="Baldwin K."/>
            <person name="Lee J.-H."/>
            <person name="Diaz-Muniz I."/>
            <person name="Dosti B."/>
            <person name="Smeianov V."/>
            <person name="Wechter W."/>
            <person name="Barabote R."/>
            <person name="Lorca G."/>
            <person name="Altermann E."/>
            <person name="Barrangou R."/>
            <person name="Ganesan B."/>
            <person name="Xie Y."/>
            <person name="Rawsthorne H."/>
            <person name="Tamir D."/>
            <person name="Parker C."/>
            <person name="Breidt F."/>
            <person name="Broadbent J.R."/>
            <person name="Hutkins R."/>
            <person name="O'Sullivan D."/>
            <person name="Steele J."/>
            <person name="Unlu G."/>
            <person name="Saier M.H. Jr."/>
            <person name="Klaenhammer T."/>
            <person name="Richardson P."/>
            <person name="Kozyavkin S."/>
            <person name="Weimer B.C."/>
            <person name="Mills D.A."/>
        </authorList>
    </citation>
    <scope>NUCLEOTIDE SEQUENCE [LARGE SCALE GENOMIC DNA]</scope>
    <source>
        <strain>ATCC 334 / BCRC 17002 / CCUG 31169 / CIP 107868 / KCTC 3260 / NRRL B-441</strain>
    </source>
</reference>
<sequence length="363" mass="38994">MRLVISGGGTGGHIYPALALIEALKAEGKLDDVLYVGTKRGLESRIVPATGLKFATLDLQGFKRSLSLSNFTTVRKFLGSLGEAKKLLQDFQPDIVVGTGGYVSGAILFAATRLHIPTVIHESNSVAGVTNKFLSHFVDRVAIVFPEVAKAFPANKVVVTGNPRAQQVAGLKPNDRLRDFGLDPHIRTLLAFGGSRGAPRINDAVVAALPIWAKADFQVLFATGRTHYDQIKAKLPDLPATIKVVPYIDDMPSILPDIGLLISRAGATTLAEITALGIPAVLIPSPNVTHHHQFLNAQSLTKQGAAITITEDELDNHFPRRVVTLMEDDEKRAAMAKASKKLGVPDASDQLIAVMTTLLSKRR</sequence>
<accession>Q039R7</accession>
<keyword id="KW-0131">Cell cycle</keyword>
<keyword id="KW-0132">Cell division</keyword>
<keyword id="KW-1003">Cell membrane</keyword>
<keyword id="KW-0133">Cell shape</keyword>
<keyword id="KW-0961">Cell wall biogenesis/degradation</keyword>
<keyword id="KW-0328">Glycosyltransferase</keyword>
<keyword id="KW-0472">Membrane</keyword>
<keyword id="KW-0573">Peptidoglycan synthesis</keyword>
<keyword id="KW-1185">Reference proteome</keyword>
<keyword id="KW-0808">Transferase</keyword>
<name>MURG_LACP3</name>
<comment type="function">
    <text evidence="1">Cell wall formation. Catalyzes the transfer of a GlcNAc subunit on undecaprenyl-pyrophosphoryl-MurNAc-pentapeptide (lipid intermediate I) to form undecaprenyl-pyrophosphoryl-MurNAc-(pentapeptide)GlcNAc (lipid intermediate II).</text>
</comment>
<comment type="catalytic activity">
    <reaction evidence="1">
        <text>Mur2Ac(oyl-L-Ala-gamma-D-Glu-L-Lys-D-Ala-D-Ala)-di-trans,octa-cis-undecaprenyl diphosphate + UDP-N-acetyl-alpha-D-glucosamine = beta-D-GlcNAc-(1-&gt;4)-Mur2Ac(oyl-L-Ala-gamma-D-Glu-L-Lys-D-Ala-D-Ala)-di-trans,octa-cis-undecaprenyl diphosphate + UDP + H(+)</text>
        <dbReference type="Rhea" id="RHEA:23192"/>
        <dbReference type="ChEBI" id="CHEBI:15378"/>
        <dbReference type="ChEBI" id="CHEBI:57705"/>
        <dbReference type="ChEBI" id="CHEBI:58223"/>
        <dbReference type="ChEBI" id="CHEBI:60032"/>
        <dbReference type="ChEBI" id="CHEBI:60033"/>
        <dbReference type="EC" id="2.4.1.227"/>
    </reaction>
</comment>
<comment type="pathway">
    <text evidence="1">Cell wall biogenesis; peptidoglycan biosynthesis.</text>
</comment>
<comment type="subcellular location">
    <subcellularLocation>
        <location evidence="1">Cell membrane</location>
        <topology evidence="1">Peripheral membrane protein</topology>
        <orientation evidence="1">Cytoplasmic side</orientation>
    </subcellularLocation>
</comment>
<comment type="similarity">
    <text evidence="1">Belongs to the glycosyltransferase 28 family. MurG subfamily.</text>
</comment>
<evidence type="ECO:0000255" key="1">
    <source>
        <dbReference type="HAMAP-Rule" id="MF_00033"/>
    </source>
</evidence>
<protein>
    <recommendedName>
        <fullName evidence="1">UDP-N-acetylglucosamine--N-acetylmuramyl-(pentapeptide) pyrophosphoryl-undecaprenol N-acetylglucosamine transferase</fullName>
        <ecNumber evidence="1">2.4.1.227</ecNumber>
    </recommendedName>
    <alternativeName>
        <fullName evidence="1">Undecaprenyl-PP-MurNAc-pentapeptide-UDPGlcNAc GlcNAc transferase</fullName>
    </alternativeName>
</protein>
<gene>
    <name evidence="1" type="primary">murG</name>
    <name type="ordered locus">LSEI_1272</name>
</gene>
<dbReference type="EC" id="2.4.1.227" evidence="1"/>
<dbReference type="EMBL" id="CP000423">
    <property type="protein sequence ID" value="ABJ70055.1"/>
    <property type="molecule type" value="Genomic_DNA"/>
</dbReference>
<dbReference type="RefSeq" id="WP_003570121.1">
    <property type="nucleotide sequence ID" value="NC_008526.1"/>
</dbReference>
<dbReference type="RefSeq" id="YP_806497.1">
    <property type="nucleotide sequence ID" value="NC_008526.1"/>
</dbReference>
<dbReference type="SMR" id="Q039R7"/>
<dbReference type="STRING" id="321967.LSEI_1272"/>
<dbReference type="CAZy" id="GT28">
    <property type="family name" value="Glycosyltransferase Family 28"/>
</dbReference>
<dbReference type="PaxDb" id="321967-LSEI_1272"/>
<dbReference type="KEGG" id="lca:LSEI_1272"/>
<dbReference type="PATRIC" id="fig|321967.11.peg.1248"/>
<dbReference type="HOGENOM" id="CLU_037404_0_1_9"/>
<dbReference type="UniPathway" id="UPA00219"/>
<dbReference type="Proteomes" id="UP000001651">
    <property type="component" value="Chromosome"/>
</dbReference>
<dbReference type="GO" id="GO:0005886">
    <property type="term" value="C:plasma membrane"/>
    <property type="evidence" value="ECO:0007669"/>
    <property type="project" value="UniProtKB-SubCell"/>
</dbReference>
<dbReference type="GO" id="GO:0050511">
    <property type="term" value="F:undecaprenyldiphospho-muramoylpentapeptide beta-N-acetylglucosaminyltransferase activity"/>
    <property type="evidence" value="ECO:0007669"/>
    <property type="project" value="UniProtKB-UniRule"/>
</dbReference>
<dbReference type="GO" id="GO:0005975">
    <property type="term" value="P:carbohydrate metabolic process"/>
    <property type="evidence" value="ECO:0007669"/>
    <property type="project" value="InterPro"/>
</dbReference>
<dbReference type="GO" id="GO:0051301">
    <property type="term" value="P:cell division"/>
    <property type="evidence" value="ECO:0007669"/>
    <property type="project" value="UniProtKB-KW"/>
</dbReference>
<dbReference type="GO" id="GO:0071555">
    <property type="term" value="P:cell wall organization"/>
    <property type="evidence" value="ECO:0007669"/>
    <property type="project" value="UniProtKB-KW"/>
</dbReference>
<dbReference type="GO" id="GO:0030259">
    <property type="term" value="P:lipid glycosylation"/>
    <property type="evidence" value="ECO:0007669"/>
    <property type="project" value="UniProtKB-UniRule"/>
</dbReference>
<dbReference type="GO" id="GO:0009252">
    <property type="term" value="P:peptidoglycan biosynthetic process"/>
    <property type="evidence" value="ECO:0007669"/>
    <property type="project" value="UniProtKB-UniRule"/>
</dbReference>
<dbReference type="GO" id="GO:0008360">
    <property type="term" value="P:regulation of cell shape"/>
    <property type="evidence" value="ECO:0007669"/>
    <property type="project" value="UniProtKB-KW"/>
</dbReference>
<dbReference type="CDD" id="cd03785">
    <property type="entry name" value="GT28_MurG"/>
    <property type="match status" value="1"/>
</dbReference>
<dbReference type="Gene3D" id="3.40.50.2000">
    <property type="entry name" value="Glycogen Phosphorylase B"/>
    <property type="match status" value="2"/>
</dbReference>
<dbReference type="HAMAP" id="MF_00033">
    <property type="entry name" value="MurG"/>
    <property type="match status" value="1"/>
</dbReference>
<dbReference type="InterPro" id="IPR006009">
    <property type="entry name" value="GlcNAc_MurG"/>
</dbReference>
<dbReference type="InterPro" id="IPR007235">
    <property type="entry name" value="Glyco_trans_28_C"/>
</dbReference>
<dbReference type="InterPro" id="IPR004276">
    <property type="entry name" value="GlycoTrans_28_N"/>
</dbReference>
<dbReference type="NCBIfam" id="TIGR01133">
    <property type="entry name" value="murG"/>
    <property type="match status" value="1"/>
</dbReference>
<dbReference type="PANTHER" id="PTHR21015:SF22">
    <property type="entry name" value="GLYCOSYLTRANSFERASE"/>
    <property type="match status" value="1"/>
</dbReference>
<dbReference type="PANTHER" id="PTHR21015">
    <property type="entry name" value="UDP-N-ACETYLGLUCOSAMINE--N-ACETYLMURAMYL-(PENTAPEPTIDE) PYROPHOSPHORYL-UNDECAPRENOL N-ACETYLGLUCOSAMINE TRANSFERASE 1"/>
    <property type="match status" value="1"/>
</dbReference>
<dbReference type="Pfam" id="PF04101">
    <property type="entry name" value="Glyco_tran_28_C"/>
    <property type="match status" value="1"/>
</dbReference>
<dbReference type="Pfam" id="PF03033">
    <property type="entry name" value="Glyco_transf_28"/>
    <property type="match status" value="1"/>
</dbReference>
<dbReference type="SUPFAM" id="SSF53756">
    <property type="entry name" value="UDP-Glycosyltransferase/glycogen phosphorylase"/>
    <property type="match status" value="1"/>
</dbReference>
<proteinExistence type="inferred from homology"/>
<feature type="chain" id="PRO_1000002659" description="UDP-N-acetylglucosamine--N-acetylmuramyl-(pentapeptide) pyrophosphoryl-undecaprenol N-acetylglucosamine transferase">
    <location>
        <begin position="1"/>
        <end position="363"/>
    </location>
</feature>
<feature type="binding site" evidence="1">
    <location>
        <begin position="10"/>
        <end position="12"/>
    </location>
    <ligand>
        <name>UDP-N-acetyl-alpha-D-glucosamine</name>
        <dbReference type="ChEBI" id="CHEBI:57705"/>
    </ligand>
</feature>
<feature type="binding site" evidence="1">
    <location>
        <position position="124"/>
    </location>
    <ligand>
        <name>UDP-N-acetyl-alpha-D-glucosamine</name>
        <dbReference type="ChEBI" id="CHEBI:57705"/>
    </ligand>
</feature>
<feature type="binding site" evidence="1">
    <location>
        <position position="195"/>
    </location>
    <ligand>
        <name>UDP-N-acetyl-alpha-D-glucosamine</name>
        <dbReference type="ChEBI" id="CHEBI:57705"/>
    </ligand>
</feature>
<feature type="binding site" evidence="1">
    <location>
        <position position="248"/>
    </location>
    <ligand>
        <name>UDP-N-acetyl-alpha-D-glucosamine</name>
        <dbReference type="ChEBI" id="CHEBI:57705"/>
    </ligand>
</feature>
<feature type="binding site" evidence="1">
    <location>
        <position position="293"/>
    </location>
    <ligand>
        <name>UDP-N-acetyl-alpha-D-glucosamine</name>
        <dbReference type="ChEBI" id="CHEBI:57705"/>
    </ligand>
</feature>